<sequence>MTRIHASAVVDSKAELASDVEVGPFSVIGPNVKIGSGTKVGSHTVIEGHTTIGKENTFAHFAAIGGPPQDMKYRGEPTQLIIGDRNTIREFTTIHTGTSQDLGITRIGNDNWIMAYVHIAHDCQVGNHTIFSSNAQIAGHVQVEDWAIMGGMSGVHQFVRIGQHAMLGGASALVQDIPPFVIAAGDKASPHGINVEGLKRRGFSSETVTALRQAYKVLYKDGLSFEDAKVEIQKMVAASSGDQATADKLAQFHDFIAASTRGIIR</sequence>
<gene>
    <name evidence="1" type="primary">lpxA</name>
    <name type="ordered locus">Pnuc_1439</name>
</gene>
<accession>A4SYT9</accession>
<comment type="function">
    <text evidence="1">Involved in the biosynthesis of lipid A, a phosphorylated glycolipid that anchors the lipopolysaccharide to the outer membrane of the cell.</text>
</comment>
<comment type="catalytic activity">
    <reaction evidence="1">
        <text>a (3R)-hydroxyacyl-[ACP] + UDP-N-acetyl-alpha-D-glucosamine = a UDP-3-O-[(3R)-3-hydroxyacyl]-N-acetyl-alpha-D-glucosamine + holo-[ACP]</text>
        <dbReference type="Rhea" id="RHEA:67812"/>
        <dbReference type="Rhea" id="RHEA-COMP:9685"/>
        <dbReference type="Rhea" id="RHEA-COMP:9945"/>
        <dbReference type="ChEBI" id="CHEBI:57705"/>
        <dbReference type="ChEBI" id="CHEBI:64479"/>
        <dbReference type="ChEBI" id="CHEBI:78827"/>
        <dbReference type="ChEBI" id="CHEBI:173225"/>
        <dbReference type="EC" id="2.3.1.129"/>
    </reaction>
</comment>
<comment type="pathway">
    <text evidence="1">Glycolipid biosynthesis; lipid IV(A) biosynthesis; lipid IV(A) from (3R)-3-hydroxytetradecanoyl-[acyl-carrier-protein] and UDP-N-acetyl-alpha-D-glucosamine: step 1/6.</text>
</comment>
<comment type="subunit">
    <text evidence="1">Homotrimer.</text>
</comment>
<comment type="subcellular location">
    <subcellularLocation>
        <location evidence="1">Cytoplasm</location>
    </subcellularLocation>
</comment>
<comment type="similarity">
    <text evidence="1">Belongs to the transferase hexapeptide repeat family. LpxA subfamily.</text>
</comment>
<dbReference type="EC" id="2.3.1.129" evidence="1"/>
<dbReference type="EMBL" id="CP000655">
    <property type="protein sequence ID" value="ABP34653.1"/>
    <property type="molecule type" value="Genomic_DNA"/>
</dbReference>
<dbReference type="RefSeq" id="WP_011903276.1">
    <property type="nucleotide sequence ID" value="NC_009379.1"/>
</dbReference>
<dbReference type="SMR" id="A4SYT9"/>
<dbReference type="GeneID" id="31481829"/>
<dbReference type="KEGG" id="pnu:Pnuc_1439"/>
<dbReference type="eggNOG" id="COG1043">
    <property type="taxonomic scope" value="Bacteria"/>
</dbReference>
<dbReference type="HOGENOM" id="CLU_061249_0_0_4"/>
<dbReference type="UniPathway" id="UPA00359">
    <property type="reaction ID" value="UER00477"/>
</dbReference>
<dbReference type="Proteomes" id="UP000000231">
    <property type="component" value="Chromosome"/>
</dbReference>
<dbReference type="GO" id="GO:0005737">
    <property type="term" value="C:cytoplasm"/>
    <property type="evidence" value="ECO:0007669"/>
    <property type="project" value="UniProtKB-SubCell"/>
</dbReference>
<dbReference type="GO" id="GO:0016020">
    <property type="term" value="C:membrane"/>
    <property type="evidence" value="ECO:0007669"/>
    <property type="project" value="GOC"/>
</dbReference>
<dbReference type="GO" id="GO:0008780">
    <property type="term" value="F:acyl-[acyl-carrier-protein]-UDP-N-acetylglucosamine O-acyltransferase activity"/>
    <property type="evidence" value="ECO:0007669"/>
    <property type="project" value="UniProtKB-UniRule"/>
</dbReference>
<dbReference type="GO" id="GO:0009245">
    <property type="term" value="P:lipid A biosynthetic process"/>
    <property type="evidence" value="ECO:0007669"/>
    <property type="project" value="UniProtKB-UniRule"/>
</dbReference>
<dbReference type="CDD" id="cd03351">
    <property type="entry name" value="LbH_UDP-GlcNAc_AT"/>
    <property type="match status" value="1"/>
</dbReference>
<dbReference type="Gene3D" id="2.160.10.10">
    <property type="entry name" value="Hexapeptide repeat proteins"/>
    <property type="match status" value="1"/>
</dbReference>
<dbReference type="Gene3D" id="1.20.1180.10">
    <property type="entry name" value="Udp N-acetylglucosamine O-acyltransferase, C-terminal domain"/>
    <property type="match status" value="1"/>
</dbReference>
<dbReference type="HAMAP" id="MF_00387">
    <property type="entry name" value="LpxA"/>
    <property type="match status" value="1"/>
</dbReference>
<dbReference type="InterPro" id="IPR029098">
    <property type="entry name" value="Acetyltransf_C"/>
</dbReference>
<dbReference type="InterPro" id="IPR037157">
    <property type="entry name" value="Acetyltransf_C_sf"/>
</dbReference>
<dbReference type="InterPro" id="IPR001451">
    <property type="entry name" value="Hexapep"/>
</dbReference>
<dbReference type="InterPro" id="IPR010137">
    <property type="entry name" value="Lipid_A_LpxA"/>
</dbReference>
<dbReference type="InterPro" id="IPR011004">
    <property type="entry name" value="Trimer_LpxA-like_sf"/>
</dbReference>
<dbReference type="NCBIfam" id="TIGR01852">
    <property type="entry name" value="lipid_A_lpxA"/>
    <property type="match status" value="1"/>
</dbReference>
<dbReference type="NCBIfam" id="NF003657">
    <property type="entry name" value="PRK05289.1"/>
    <property type="match status" value="1"/>
</dbReference>
<dbReference type="PANTHER" id="PTHR43480">
    <property type="entry name" value="ACYL-[ACYL-CARRIER-PROTEIN]--UDP-N-ACETYLGLUCOSAMINE O-ACYLTRANSFERASE"/>
    <property type="match status" value="1"/>
</dbReference>
<dbReference type="PANTHER" id="PTHR43480:SF1">
    <property type="entry name" value="ACYL-[ACYL-CARRIER-PROTEIN]--UDP-N-ACETYLGLUCOSAMINE O-ACYLTRANSFERASE, MITOCHONDRIAL-RELATED"/>
    <property type="match status" value="1"/>
</dbReference>
<dbReference type="Pfam" id="PF13720">
    <property type="entry name" value="Acetyltransf_11"/>
    <property type="match status" value="1"/>
</dbReference>
<dbReference type="Pfam" id="PF00132">
    <property type="entry name" value="Hexapep"/>
    <property type="match status" value="1"/>
</dbReference>
<dbReference type="PIRSF" id="PIRSF000456">
    <property type="entry name" value="UDP-GlcNAc_acltr"/>
    <property type="match status" value="1"/>
</dbReference>
<dbReference type="SUPFAM" id="SSF51161">
    <property type="entry name" value="Trimeric LpxA-like enzymes"/>
    <property type="match status" value="1"/>
</dbReference>
<keyword id="KW-0012">Acyltransferase</keyword>
<keyword id="KW-0963">Cytoplasm</keyword>
<keyword id="KW-0441">Lipid A biosynthesis</keyword>
<keyword id="KW-0444">Lipid biosynthesis</keyword>
<keyword id="KW-0443">Lipid metabolism</keyword>
<keyword id="KW-1185">Reference proteome</keyword>
<keyword id="KW-0677">Repeat</keyword>
<keyword id="KW-0808">Transferase</keyword>
<feature type="chain" id="PRO_1000080210" description="Acyl-[acyl-carrier-protein]--UDP-N-acetylglucosamine O-acyltransferase">
    <location>
        <begin position="1"/>
        <end position="265"/>
    </location>
</feature>
<proteinExistence type="inferred from homology"/>
<name>LPXA_POLAQ</name>
<reference key="1">
    <citation type="journal article" date="2012" name="Stand. Genomic Sci.">
        <title>Complete genome sequence of Polynucleobacter necessarius subsp. asymbioticus type strain (QLW-P1DMWA-1(T)).</title>
        <authorList>
            <person name="Meincke L."/>
            <person name="Copeland A."/>
            <person name="Lapidus A."/>
            <person name="Lucas S."/>
            <person name="Berry K.W."/>
            <person name="Del Rio T.G."/>
            <person name="Hammon N."/>
            <person name="Dalin E."/>
            <person name="Tice H."/>
            <person name="Pitluck S."/>
            <person name="Richardson P."/>
            <person name="Bruce D."/>
            <person name="Goodwin L."/>
            <person name="Han C."/>
            <person name="Tapia R."/>
            <person name="Detter J.C."/>
            <person name="Schmutz J."/>
            <person name="Brettin T."/>
            <person name="Larimer F."/>
            <person name="Land M."/>
            <person name="Hauser L."/>
            <person name="Kyrpides N.C."/>
            <person name="Ivanova N."/>
            <person name="Goker M."/>
            <person name="Woyke T."/>
            <person name="Wu Q.L."/>
            <person name="Pockl M."/>
            <person name="Hahn M.W."/>
            <person name="Klenk H.P."/>
        </authorList>
    </citation>
    <scope>NUCLEOTIDE SEQUENCE [LARGE SCALE GENOMIC DNA]</scope>
    <source>
        <strain>DSM 18221 / CIP 109841 / QLW-P1DMWA-1</strain>
    </source>
</reference>
<organism>
    <name type="scientific">Polynucleobacter asymbioticus (strain DSM 18221 / CIP 109841 / QLW-P1DMWA-1)</name>
    <name type="common">Polynucleobacter necessarius subsp. asymbioticus</name>
    <dbReference type="NCBI Taxonomy" id="312153"/>
    <lineage>
        <taxon>Bacteria</taxon>
        <taxon>Pseudomonadati</taxon>
        <taxon>Pseudomonadota</taxon>
        <taxon>Betaproteobacteria</taxon>
        <taxon>Burkholderiales</taxon>
        <taxon>Burkholderiaceae</taxon>
        <taxon>Polynucleobacter</taxon>
    </lineage>
</organism>
<evidence type="ECO:0000255" key="1">
    <source>
        <dbReference type="HAMAP-Rule" id="MF_00387"/>
    </source>
</evidence>
<protein>
    <recommendedName>
        <fullName evidence="1">Acyl-[acyl-carrier-protein]--UDP-N-acetylglucosamine O-acyltransferase</fullName>
        <shortName evidence="1">UDP-N-acetylglucosamine acyltransferase</shortName>
        <ecNumber evidence="1">2.3.1.129</ecNumber>
    </recommendedName>
</protein>